<dbReference type="EC" id="2.1.1.192" evidence="1"/>
<dbReference type="EMBL" id="CP000821">
    <property type="protein sequence ID" value="ABV36040.1"/>
    <property type="molecule type" value="Genomic_DNA"/>
</dbReference>
<dbReference type="RefSeq" id="WP_012141776.1">
    <property type="nucleotide sequence ID" value="NC_009831.1"/>
</dbReference>
<dbReference type="SMR" id="A8FT67"/>
<dbReference type="STRING" id="425104.Ssed_1429"/>
<dbReference type="KEGG" id="sse:Ssed_1429"/>
<dbReference type="eggNOG" id="COG0820">
    <property type="taxonomic scope" value="Bacteria"/>
</dbReference>
<dbReference type="HOGENOM" id="CLU_029101_0_0_6"/>
<dbReference type="OrthoDB" id="9793973at2"/>
<dbReference type="Proteomes" id="UP000002015">
    <property type="component" value="Chromosome"/>
</dbReference>
<dbReference type="GO" id="GO:0005737">
    <property type="term" value="C:cytoplasm"/>
    <property type="evidence" value="ECO:0007669"/>
    <property type="project" value="UniProtKB-SubCell"/>
</dbReference>
<dbReference type="GO" id="GO:0051539">
    <property type="term" value="F:4 iron, 4 sulfur cluster binding"/>
    <property type="evidence" value="ECO:0007669"/>
    <property type="project" value="UniProtKB-UniRule"/>
</dbReference>
<dbReference type="GO" id="GO:0046872">
    <property type="term" value="F:metal ion binding"/>
    <property type="evidence" value="ECO:0007669"/>
    <property type="project" value="UniProtKB-KW"/>
</dbReference>
<dbReference type="GO" id="GO:0070040">
    <property type="term" value="F:rRNA (adenine(2503)-C2-)-methyltransferase activity"/>
    <property type="evidence" value="ECO:0007669"/>
    <property type="project" value="UniProtKB-UniRule"/>
</dbReference>
<dbReference type="GO" id="GO:0019843">
    <property type="term" value="F:rRNA binding"/>
    <property type="evidence" value="ECO:0007669"/>
    <property type="project" value="UniProtKB-UniRule"/>
</dbReference>
<dbReference type="GO" id="GO:0002935">
    <property type="term" value="F:tRNA (adenine(37)-C2)-methyltransferase activity"/>
    <property type="evidence" value="ECO:0007669"/>
    <property type="project" value="UniProtKB-UniRule"/>
</dbReference>
<dbReference type="GO" id="GO:0000049">
    <property type="term" value="F:tRNA binding"/>
    <property type="evidence" value="ECO:0007669"/>
    <property type="project" value="UniProtKB-UniRule"/>
</dbReference>
<dbReference type="GO" id="GO:0070475">
    <property type="term" value="P:rRNA base methylation"/>
    <property type="evidence" value="ECO:0007669"/>
    <property type="project" value="UniProtKB-UniRule"/>
</dbReference>
<dbReference type="GO" id="GO:0030488">
    <property type="term" value="P:tRNA methylation"/>
    <property type="evidence" value="ECO:0007669"/>
    <property type="project" value="UniProtKB-UniRule"/>
</dbReference>
<dbReference type="CDD" id="cd01335">
    <property type="entry name" value="Radical_SAM"/>
    <property type="match status" value="1"/>
</dbReference>
<dbReference type="FunFam" id="1.10.150.530:FF:000003">
    <property type="entry name" value="Dual-specificity RNA methyltransferase RlmN"/>
    <property type="match status" value="1"/>
</dbReference>
<dbReference type="FunFam" id="3.20.20.70:FF:000008">
    <property type="entry name" value="Dual-specificity RNA methyltransferase RlmN"/>
    <property type="match status" value="1"/>
</dbReference>
<dbReference type="Gene3D" id="1.10.150.530">
    <property type="match status" value="1"/>
</dbReference>
<dbReference type="Gene3D" id="3.20.20.70">
    <property type="entry name" value="Aldolase class I"/>
    <property type="match status" value="1"/>
</dbReference>
<dbReference type="HAMAP" id="MF_01849">
    <property type="entry name" value="RNA_methyltr_RlmN"/>
    <property type="match status" value="1"/>
</dbReference>
<dbReference type="InterPro" id="IPR013785">
    <property type="entry name" value="Aldolase_TIM"/>
</dbReference>
<dbReference type="InterPro" id="IPR040072">
    <property type="entry name" value="Methyltransferase_A"/>
</dbReference>
<dbReference type="InterPro" id="IPR048641">
    <property type="entry name" value="RlmN_N"/>
</dbReference>
<dbReference type="InterPro" id="IPR027492">
    <property type="entry name" value="RNA_MTrfase_RlmN"/>
</dbReference>
<dbReference type="InterPro" id="IPR004383">
    <property type="entry name" value="rRNA_lsu_MTrfase_RlmN/Cfr"/>
</dbReference>
<dbReference type="InterPro" id="IPR007197">
    <property type="entry name" value="rSAM"/>
</dbReference>
<dbReference type="NCBIfam" id="NF008396">
    <property type="entry name" value="PRK11194.1"/>
    <property type="match status" value="1"/>
</dbReference>
<dbReference type="NCBIfam" id="TIGR00048">
    <property type="entry name" value="rRNA_mod_RlmN"/>
    <property type="match status" value="1"/>
</dbReference>
<dbReference type="PANTHER" id="PTHR30544">
    <property type="entry name" value="23S RRNA METHYLTRANSFERASE"/>
    <property type="match status" value="1"/>
</dbReference>
<dbReference type="PANTHER" id="PTHR30544:SF5">
    <property type="entry name" value="RADICAL SAM CORE DOMAIN-CONTAINING PROTEIN"/>
    <property type="match status" value="1"/>
</dbReference>
<dbReference type="Pfam" id="PF04055">
    <property type="entry name" value="Radical_SAM"/>
    <property type="match status" value="1"/>
</dbReference>
<dbReference type="Pfam" id="PF21016">
    <property type="entry name" value="RlmN_N"/>
    <property type="match status" value="1"/>
</dbReference>
<dbReference type="PIRSF" id="PIRSF006004">
    <property type="entry name" value="CHP00048"/>
    <property type="match status" value="1"/>
</dbReference>
<dbReference type="SFLD" id="SFLDF00275">
    <property type="entry name" value="adenosine_C2_methyltransferase"/>
    <property type="match status" value="1"/>
</dbReference>
<dbReference type="SFLD" id="SFLDS00029">
    <property type="entry name" value="Radical_SAM"/>
    <property type="match status" value="1"/>
</dbReference>
<dbReference type="SUPFAM" id="SSF102114">
    <property type="entry name" value="Radical SAM enzymes"/>
    <property type="match status" value="1"/>
</dbReference>
<dbReference type="PROSITE" id="PS51918">
    <property type="entry name" value="RADICAL_SAM"/>
    <property type="match status" value="1"/>
</dbReference>
<reference key="1">
    <citation type="submission" date="2007-08" db="EMBL/GenBank/DDBJ databases">
        <title>Complete sequence of Shewanella sediminis HAW-EB3.</title>
        <authorList>
            <consortium name="US DOE Joint Genome Institute"/>
            <person name="Copeland A."/>
            <person name="Lucas S."/>
            <person name="Lapidus A."/>
            <person name="Barry K."/>
            <person name="Glavina del Rio T."/>
            <person name="Dalin E."/>
            <person name="Tice H."/>
            <person name="Pitluck S."/>
            <person name="Chertkov O."/>
            <person name="Brettin T."/>
            <person name="Bruce D."/>
            <person name="Detter J.C."/>
            <person name="Han C."/>
            <person name="Schmutz J."/>
            <person name="Larimer F."/>
            <person name="Land M."/>
            <person name="Hauser L."/>
            <person name="Kyrpides N."/>
            <person name="Kim E."/>
            <person name="Zhao J.-S."/>
            <person name="Richardson P."/>
        </authorList>
    </citation>
    <scope>NUCLEOTIDE SEQUENCE [LARGE SCALE GENOMIC DNA]</scope>
    <source>
        <strain>HAW-EB3</strain>
    </source>
</reference>
<proteinExistence type="inferred from homology"/>
<comment type="function">
    <text evidence="1">Specifically methylates position 2 of adenine 2503 in 23S rRNA and position 2 of adenine 37 in tRNAs. m2A2503 modification seems to play a crucial role in the proofreading step occurring at the peptidyl transferase center and thus would serve to optimize ribosomal fidelity.</text>
</comment>
<comment type="catalytic activity">
    <reaction evidence="1">
        <text>adenosine(2503) in 23S rRNA + 2 reduced [2Fe-2S]-[ferredoxin] + 2 S-adenosyl-L-methionine = 2-methyladenosine(2503) in 23S rRNA + 5'-deoxyadenosine + L-methionine + 2 oxidized [2Fe-2S]-[ferredoxin] + S-adenosyl-L-homocysteine</text>
        <dbReference type="Rhea" id="RHEA:42916"/>
        <dbReference type="Rhea" id="RHEA-COMP:10000"/>
        <dbReference type="Rhea" id="RHEA-COMP:10001"/>
        <dbReference type="Rhea" id="RHEA-COMP:10152"/>
        <dbReference type="Rhea" id="RHEA-COMP:10282"/>
        <dbReference type="ChEBI" id="CHEBI:17319"/>
        <dbReference type="ChEBI" id="CHEBI:33737"/>
        <dbReference type="ChEBI" id="CHEBI:33738"/>
        <dbReference type="ChEBI" id="CHEBI:57844"/>
        <dbReference type="ChEBI" id="CHEBI:57856"/>
        <dbReference type="ChEBI" id="CHEBI:59789"/>
        <dbReference type="ChEBI" id="CHEBI:74411"/>
        <dbReference type="ChEBI" id="CHEBI:74497"/>
        <dbReference type="EC" id="2.1.1.192"/>
    </reaction>
</comment>
<comment type="catalytic activity">
    <reaction evidence="1">
        <text>adenosine(37) in tRNA + 2 reduced [2Fe-2S]-[ferredoxin] + 2 S-adenosyl-L-methionine = 2-methyladenosine(37) in tRNA + 5'-deoxyadenosine + L-methionine + 2 oxidized [2Fe-2S]-[ferredoxin] + S-adenosyl-L-homocysteine</text>
        <dbReference type="Rhea" id="RHEA:43332"/>
        <dbReference type="Rhea" id="RHEA-COMP:10000"/>
        <dbReference type="Rhea" id="RHEA-COMP:10001"/>
        <dbReference type="Rhea" id="RHEA-COMP:10162"/>
        <dbReference type="Rhea" id="RHEA-COMP:10485"/>
        <dbReference type="ChEBI" id="CHEBI:17319"/>
        <dbReference type="ChEBI" id="CHEBI:33737"/>
        <dbReference type="ChEBI" id="CHEBI:33738"/>
        <dbReference type="ChEBI" id="CHEBI:57844"/>
        <dbReference type="ChEBI" id="CHEBI:57856"/>
        <dbReference type="ChEBI" id="CHEBI:59789"/>
        <dbReference type="ChEBI" id="CHEBI:74411"/>
        <dbReference type="ChEBI" id="CHEBI:74497"/>
        <dbReference type="EC" id="2.1.1.192"/>
    </reaction>
</comment>
<comment type="cofactor">
    <cofactor evidence="1">
        <name>[4Fe-4S] cluster</name>
        <dbReference type="ChEBI" id="CHEBI:49883"/>
    </cofactor>
    <text evidence="1">Binds 1 [4Fe-4S] cluster. The cluster is coordinated with 3 cysteines and an exchangeable S-adenosyl-L-methionine.</text>
</comment>
<comment type="subcellular location">
    <subcellularLocation>
        <location evidence="1">Cytoplasm</location>
    </subcellularLocation>
</comment>
<comment type="miscellaneous">
    <text evidence="1">Reaction proceeds by a ping-pong mechanism involving intermediate methylation of a conserved cysteine residue.</text>
</comment>
<comment type="similarity">
    <text evidence="1">Belongs to the radical SAM superfamily. RlmN family.</text>
</comment>
<keyword id="KW-0004">4Fe-4S</keyword>
<keyword id="KW-0963">Cytoplasm</keyword>
<keyword id="KW-1015">Disulfide bond</keyword>
<keyword id="KW-0408">Iron</keyword>
<keyword id="KW-0411">Iron-sulfur</keyword>
<keyword id="KW-0479">Metal-binding</keyword>
<keyword id="KW-0489">Methyltransferase</keyword>
<keyword id="KW-1185">Reference proteome</keyword>
<keyword id="KW-0698">rRNA processing</keyword>
<keyword id="KW-0949">S-adenosyl-L-methionine</keyword>
<keyword id="KW-0808">Transferase</keyword>
<keyword id="KW-0819">tRNA processing</keyword>
<evidence type="ECO:0000255" key="1">
    <source>
        <dbReference type="HAMAP-Rule" id="MF_01849"/>
    </source>
</evidence>
<evidence type="ECO:0000255" key="2">
    <source>
        <dbReference type="PROSITE-ProRule" id="PRU01266"/>
    </source>
</evidence>
<sequence length="373" mass="41564">MSEKKINLLDLDRKGLRALFTEMGEKPFRADQLMKWIYHFGETDFDAMNNINKVLRAKLSARCEVVAPEISSYQKSADGTIKFAINVGQGQEVETVYIPEEDRATLCVSSQVGCALECTFCSTAQQGFNRNLTVSEIIGQVWRVANFIGFQKETGERPITNVVMMGMGEPLLNLANVIPAMDIMLDDFGFSLSKRRVTVSTSGVVPALDKLGDALDVALAVSIHAPNDELRDVLVPVNKKYPLEEFLAGIRRYIAKSNANRGRVTVEYVMLDHINDSTDQAHELAKLMKDTPCKINLIPFNPYPGSPYGRSSNSRIDRFSKVLMEYGLTVIVRKTRGDDIDAACGQLAGDIRDRTKRLAKKRMQDSQISVTIN</sequence>
<name>RLMN_SHESH</name>
<organism>
    <name type="scientific">Shewanella sediminis (strain HAW-EB3)</name>
    <dbReference type="NCBI Taxonomy" id="425104"/>
    <lineage>
        <taxon>Bacteria</taxon>
        <taxon>Pseudomonadati</taxon>
        <taxon>Pseudomonadota</taxon>
        <taxon>Gammaproteobacteria</taxon>
        <taxon>Alteromonadales</taxon>
        <taxon>Shewanellaceae</taxon>
        <taxon>Shewanella</taxon>
    </lineage>
</organism>
<protein>
    <recommendedName>
        <fullName evidence="1">Dual-specificity RNA methyltransferase RlmN</fullName>
        <ecNumber evidence="1">2.1.1.192</ecNumber>
    </recommendedName>
    <alternativeName>
        <fullName evidence="1">23S rRNA (adenine(2503)-C(2))-methyltransferase</fullName>
    </alternativeName>
    <alternativeName>
        <fullName evidence="1">23S rRNA m2A2503 methyltransferase</fullName>
    </alternativeName>
    <alternativeName>
        <fullName evidence="1">Ribosomal RNA large subunit methyltransferase N</fullName>
    </alternativeName>
    <alternativeName>
        <fullName evidence="1">tRNA (adenine(37)-C(2))-methyltransferase</fullName>
    </alternativeName>
    <alternativeName>
        <fullName evidence="1">tRNA m2A37 methyltransferase</fullName>
    </alternativeName>
</protein>
<accession>A8FT67</accession>
<feature type="chain" id="PRO_0000350403" description="Dual-specificity RNA methyltransferase RlmN">
    <location>
        <begin position="1"/>
        <end position="373"/>
    </location>
</feature>
<feature type="domain" description="Radical SAM core" evidence="2">
    <location>
        <begin position="100"/>
        <end position="339"/>
    </location>
</feature>
<feature type="active site" description="Proton acceptor" evidence="1">
    <location>
        <position position="94"/>
    </location>
</feature>
<feature type="active site" description="S-methylcysteine intermediate" evidence="1">
    <location>
        <position position="344"/>
    </location>
</feature>
<feature type="binding site" evidence="1">
    <location>
        <position position="114"/>
    </location>
    <ligand>
        <name>[4Fe-4S] cluster</name>
        <dbReference type="ChEBI" id="CHEBI:49883"/>
        <note>4Fe-4S-S-AdoMet</note>
    </ligand>
</feature>
<feature type="binding site" evidence="1">
    <location>
        <position position="118"/>
    </location>
    <ligand>
        <name>[4Fe-4S] cluster</name>
        <dbReference type="ChEBI" id="CHEBI:49883"/>
        <note>4Fe-4S-S-AdoMet</note>
    </ligand>
</feature>
<feature type="binding site" evidence="1">
    <location>
        <position position="121"/>
    </location>
    <ligand>
        <name>[4Fe-4S] cluster</name>
        <dbReference type="ChEBI" id="CHEBI:49883"/>
        <note>4Fe-4S-S-AdoMet</note>
    </ligand>
</feature>
<feature type="binding site" evidence="1">
    <location>
        <begin position="168"/>
        <end position="169"/>
    </location>
    <ligand>
        <name>S-adenosyl-L-methionine</name>
        <dbReference type="ChEBI" id="CHEBI:59789"/>
    </ligand>
</feature>
<feature type="binding site" evidence="1">
    <location>
        <position position="200"/>
    </location>
    <ligand>
        <name>S-adenosyl-L-methionine</name>
        <dbReference type="ChEBI" id="CHEBI:59789"/>
    </ligand>
</feature>
<feature type="binding site" evidence="1">
    <location>
        <begin position="222"/>
        <end position="224"/>
    </location>
    <ligand>
        <name>S-adenosyl-L-methionine</name>
        <dbReference type="ChEBI" id="CHEBI:59789"/>
    </ligand>
</feature>
<feature type="binding site" evidence="1">
    <location>
        <position position="301"/>
    </location>
    <ligand>
        <name>S-adenosyl-L-methionine</name>
        <dbReference type="ChEBI" id="CHEBI:59789"/>
    </ligand>
</feature>
<feature type="disulfide bond" description="(transient)" evidence="1">
    <location>
        <begin position="107"/>
        <end position="344"/>
    </location>
</feature>
<gene>
    <name evidence="1" type="primary">rlmN</name>
    <name type="ordered locus">Ssed_1429</name>
</gene>